<feature type="chain" id="PRO_0000411116" description="Glutathione transferase GST 23">
    <location>
        <begin position="1"/>
        <end position="222"/>
    </location>
</feature>
<feature type="domain" description="GST N-terminal">
    <location>
        <begin position="4"/>
        <end position="83"/>
    </location>
</feature>
<feature type="domain" description="GST C-terminal">
    <location>
        <begin position="89"/>
        <end position="220"/>
    </location>
</feature>
<feature type="binding site" evidence="1">
    <location>
        <position position="14"/>
    </location>
    <ligand>
        <name>glutathione</name>
        <dbReference type="ChEBI" id="CHEBI:57925"/>
    </ligand>
</feature>
<feature type="binding site" evidence="1">
    <location>
        <position position="41"/>
    </location>
    <ligand>
        <name>glutathione</name>
        <dbReference type="ChEBI" id="CHEBI:57925"/>
    </ligand>
</feature>
<feature type="binding site" evidence="1">
    <location>
        <position position="55"/>
    </location>
    <ligand>
        <name>glutathione</name>
        <dbReference type="ChEBI" id="CHEBI:57925"/>
    </ligand>
</feature>
<feature type="binding site" evidence="1">
    <location>
        <begin position="67"/>
        <end position="68"/>
    </location>
    <ligand>
        <name>glutathione</name>
        <dbReference type="ChEBI" id="CHEBI:57925"/>
    </ligand>
</feature>
<feature type="sequence variant" evidence="2">
    <original>E</original>
    <variation>D</variation>
    <location>
        <position position="141"/>
    </location>
</feature>
<feature type="sequence variant" evidence="2">
    <original>H</original>
    <variation>D</variation>
    <location>
        <position position="179"/>
    </location>
</feature>
<feature type="sequence variant" evidence="2">
    <original>L</original>
    <variation>V</variation>
    <location>
        <position position="195"/>
    </location>
</feature>
<proteinExistence type="evidence at transcript level"/>
<evidence type="ECO:0000250" key="1"/>
<evidence type="ECO:0000269" key="2">
    <source>
    </source>
</evidence>
<evidence type="ECO:0000269" key="3">
    <source>
    </source>
</evidence>
<evidence type="ECO:0000305" key="4"/>
<comment type="function">
    <text evidence="3">Involved in multiple disease resistance (MDR).</text>
</comment>
<comment type="catalytic activity">
    <reaction>
        <text>RX + glutathione = an S-substituted glutathione + a halide anion + H(+)</text>
        <dbReference type="Rhea" id="RHEA:16437"/>
        <dbReference type="ChEBI" id="CHEBI:15378"/>
        <dbReference type="ChEBI" id="CHEBI:16042"/>
        <dbReference type="ChEBI" id="CHEBI:17792"/>
        <dbReference type="ChEBI" id="CHEBI:57925"/>
        <dbReference type="ChEBI" id="CHEBI:90779"/>
        <dbReference type="EC" id="2.5.1.18"/>
    </reaction>
</comment>
<comment type="miscellaneous">
    <text>The presence of Asp-179 is significantly associated with a multiple disease resistance.</text>
</comment>
<comment type="similarity">
    <text evidence="4">Belongs to the GST superfamily.</text>
</comment>
<comment type="caution">
    <text evidence="4">PubMed:11080288 describes GST23 and GST36 as two different members of the GST family but they seem to be allelic variants of the same gene.</text>
</comment>
<reference key="1">
    <citation type="journal article" date="2000" name="Plant Physiol.">
        <title>A genomics approach to the comprehensive analysis of the glutathione S-transferase gene family in soybean and maize.</title>
        <authorList>
            <person name="McGonigle B."/>
            <person name="Keeler S.J."/>
            <person name="Lau S.M."/>
            <person name="Koeppe M.K."/>
            <person name="O'Keefe D.P."/>
        </authorList>
    </citation>
    <scope>NUCLEOTIDE SEQUENCE [MRNA]</scope>
    <scope>VARIANTS ASP-141; ASP-179 AND VAL-195</scope>
</reference>
<reference key="2">
    <citation type="submission" date="2008-07" db="EMBL/GenBank/DDBJ databases">
        <title>Maize full-length cDNA project.</title>
        <authorList>
            <person name="Yu Y."/>
            <person name="Currie J."/>
            <person name="Lomeli R."/>
            <person name="Angelova A."/>
            <person name="Collura K."/>
            <person name="Wissotski M."/>
            <person name="Campos D."/>
            <person name="Kudrna D."/>
            <person name="Golser W."/>
            <person name="Ashely E."/>
            <person name="Haller K."/>
            <person name="Descour A."/>
            <person name="Fernandes J."/>
            <person name="Zuccolo A."/>
            <person name="Soderlund C."/>
            <person name="Walbot V."/>
        </authorList>
    </citation>
    <scope>NUCLEOTIDE SEQUENCE [LARGE SCALE MRNA]</scope>
    <source>
        <strain>cv. B73</strain>
    </source>
</reference>
<reference key="3">
    <citation type="journal article" date="2009" name="Plant Mol. Biol.">
        <title>Insights into corn genes derived from large-scale cDNA sequencing.</title>
        <authorList>
            <person name="Alexandrov N.N."/>
            <person name="Brover V.V."/>
            <person name="Freidin S."/>
            <person name="Troukhan M.E."/>
            <person name="Tatarinova T.V."/>
            <person name="Zhang H."/>
            <person name="Swaller T.J."/>
            <person name="Lu Y.-P."/>
            <person name="Bouck J."/>
            <person name="Flavell R.B."/>
            <person name="Feldmann K.A."/>
        </authorList>
    </citation>
    <scope>NUCLEOTIDE SEQUENCE [LARGE SCALE MRNA]</scope>
</reference>
<reference key="4">
    <citation type="journal article" date="2011" name="Proc. Natl. Acad. Sci. U.S.A.">
        <title>Multivariate analysis of maize disease resistances suggests a pleiotropic genetic basis and implicates a GST gene.</title>
        <authorList>
            <person name="Wisser R.J."/>
            <person name="Kolkman J.M."/>
            <person name="Patzoldt M.E."/>
            <person name="Holland J.B."/>
            <person name="Yu J."/>
            <person name="Krakowsky M."/>
            <person name="Nelson R.J."/>
            <person name="Balint-Kurti P.J."/>
        </authorList>
    </citation>
    <scope>PARTIAL NUCLEOTIDE SEQUENCE [GENOMIC DNA]</scope>
    <scope>VARIANTS</scope>
    <scope>FUNCTION</scope>
</reference>
<keyword id="KW-0611">Plant defense</keyword>
<keyword id="KW-1185">Reference proteome</keyword>
<keyword id="KW-0808">Transferase</keyword>
<name>GST23_MAIZE</name>
<sequence>MAEKGVKVLGMWASPMVIRVEWALRLKGVEYEYVDEDLANKSADLLRHNPVTKKVPVLVHDGKPVAESTIIVEYIDEVWKGGYPIMPGDPYERAQARFWARFAEDKCNAALYPIFTATGEAQRKAVHEAQQCLKTLETALEGKKFFGGDAVGYLDIVVGWFAHWLPVIEEVTGASVVTHEELPLMKAWFGRFLALDVVKAALPDRDRLLAANKARREQLLSA</sequence>
<dbReference type="EC" id="2.5.1.18"/>
<dbReference type="EMBL" id="AF244688">
    <property type="protein sequence ID" value="AAG34831.1"/>
    <property type="molecule type" value="mRNA"/>
</dbReference>
<dbReference type="EMBL" id="AF244701">
    <property type="protein sequence ID" value="AAG34844.1"/>
    <property type="molecule type" value="mRNA"/>
</dbReference>
<dbReference type="EMBL" id="BT040471">
    <property type="protein sequence ID" value="ACF85476.1"/>
    <property type="molecule type" value="mRNA"/>
</dbReference>
<dbReference type="EMBL" id="EU963788">
    <property type="protein sequence ID" value="ACG35906.1"/>
    <property type="molecule type" value="mRNA"/>
</dbReference>
<dbReference type="RefSeq" id="NP_001104994.1">
    <property type="nucleotide sequence ID" value="NM_001111524.2"/>
</dbReference>
<dbReference type="SMR" id="Q9FQA3"/>
<dbReference type="FunCoup" id="Q9FQA3">
    <property type="interactions" value="130"/>
</dbReference>
<dbReference type="STRING" id="4577.Q9FQA3"/>
<dbReference type="PaxDb" id="4577-GRMZM2G416632_P01"/>
<dbReference type="EnsemblPlants" id="Zm00001eb315490_T001">
    <property type="protein sequence ID" value="Zm00001eb315490_P001"/>
    <property type="gene ID" value="Zm00001eb315490"/>
</dbReference>
<dbReference type="GeneID" id="541845"/>
<dbReference type="Gramene" id="Zm00001eb315490_T001">
    <property type="protein sequence ID" value="Zm00001eb315490_P001"/>
    <property type="gene ID" value="Zm00001eb315490"/>
</dbReference>
<dbReference type="KEGG" id="zma:541845"/>
<dbReference type="MaizeGDB" id="452083"/>
<dbReference type="MaizeGDB" id="542096"/>
<dbReference type="eggNOG" id="KOG0406">
    <property type="taxonomic scope" value="Eukaryota"/>
</dbReference>
<dbReference type="HOGENOM" id="CLU_011226_18_1_1"/>
<dbReference type="InParanoid" id="Q9FQA3"/>
<dbReference type="OMA" id="WFAHWLP"/>
<dbReference type="OrthoDB" id="202840at2759"/>
<dbReference type="Proteomes" id="UP000007305">
    <property type="component" value="Chromosome 7"/>
</dbReference>
<dbReference type="ExpressionAtlas" id="Q9FQA3">
    <property type="expression patterns" value="baseline and differential"/>
</dbReference>
<dbReference type="GO" id="GO:0005737">
    <property type="term" value="C:cytoplasm"/>
    <property type="evidence" value="ECO:0000318"/>
    <property type="project" value="GO_Central"/>
</dbReference>
<dbReference type="GO" id="GO:0004364">
    <property type="term" value="F:glutathione transferase activity"/>
    <property type="evidence" value="ECO:0000318"/>
    <property type="project" value="GO_Central"/>
</dbReference>
<dbReference type="GO" id="GO:0006952">
    <property type="term" value="P:defense response"/>
    <property type="evidence" value="ECO:0007669"/>
    <property type="project" value="UniProtKB-KW"/>
</dbReference>
<dbReference type="GO" id="GO:0006749">
    <property type="term" value="P:glutathione metabolic process"/>
    <property type="evidence" value="ECO:0000318"/>
    <property type="project" value="GO_Central"/>
</dbReference>
<dbReference type="CDD" id="cd03185">
    <property type="entry name" value="GST_C_Tau"/>
    <property type="match status" value="1"/>
</dbReference>
<dbReference type="CDD" id="cd03058">
    <property type="entry name" value="GST_N_Tau"/>
    <property type="match status" value="1"/>
</dbReference>
<dbReference type="FunFam" id="3.40.30.10:FF:000197">
    <property type="entry name" value="Glutathione S-transferase U10"/>
    <property type="match status" value="1"/>
</dbReference>
<dbReference type="FunFam" id="1.20.1050.10:FF:000012">
    <property type="entry name" value="Tau class glutathione S-transferase"/>
    <property type="match status" value="1"/>
</dbReference>
<dbReference type="Gene3D" id="1.20.1050.10">
    <property type="match status" value="1"/>
</dbReference>
<dbReference type="Gene3D" id="3.40.30.10">
    <property type="entry name" value="Glutaredoxin"/>
    <property type="match status" value="1"/>
</dbReference>
<dbReference type="InterPro" id="IPR010987">
    <property type="entry name" value="Glutathione-S-Trfase_C-like"/>
</dbReference>
<dbReference type="InterPro" id="IPR036282">
    <property type="entry name" value="Glutathione-S-Trfase_C_sf"/>
</dbReference>
<dbReference type="InterPro" id="IPR004045">
    <property type="entry name" value="Glutathione_S-Trfase_N"/>
</dbReference>
<dbReference type="InterPro" id="IPR004046">
    <property type="entry name" value="GST_C"/>
</dbReference>
<dbReference type="InterPro" id="IPR045074">
    <property type="entry name" value="GST_C_Tau"/>
</dbReference>
<dbReference type="InterPro" id="IPR045073">
    <property type="entry name" value="Omega/Tau-like"/>
</dbReference>
<dbReference type="InterPro" id="IPR036249">
    <property type="entry name" value="Thioredoxin-like_sf"/>
</dbReference>
<dbReference type="PANTHER" id="PTHR11260">
    <property type="entry name" value="GLUTATHIONE S-TRANSFERASE, GST, SUPERFAMILY, GST DOMAIN CONTAINING"/>
    <property type="match status" value="1"/>
</dbReference>
<dbReference type="PANTHER" id="PTHR11260:SF760">
    <property type="entry name" value="GLUTATHIONE TRANSFERASE GST 23"/>
    <property type="match status" value="1"/>
</dbReference>
<dbReference type="Pfam" id="PF00043">
    <property type="entry name" value="GST_C"/>
    <property type="match status" value="1"/>
</dbReference>
<dbReference type="Pfam" id="PF02798">
    <property type="entry name" value="GST_N"/>
    <property type="match status" value="1"/>
</dbReference>
<dbReference type="SFLD" id="SFLDG01152">
    <property type="entry name" value="Main.3:_Omega-_and_Tau-like"/>
    <property type="match status" value="1"/>
</dbReference>
<dbReference type="SFLD" id="SFLDG00358">
    <property type="entry name" value="Main_(cytGST)"/>
    <property type="match status" value="1"/>
</dbReference>
<dbReference type="SUPFAM" id="SSF47616">
    <property type="entry name" value="GST C-terminal domain-like"/>
    <property type="match status" value="1"/>
</dbReference>
<dbReference type="SUPFAM" id="SSF52833">
    <property type="entry name" value="Thioredoxin-like"/>
    <property type="match status" value="1"/>
</dbReference>
<dbReference type="PROSITE" id="PS50405">
    <property type="entry name" value="GST_CTER"/>
    <property type="match status" value="1"/>
</dbReference>
<dbReference type="PROSITE" id="PS50404">
    <property type="entry name" value="GST_NTER"/>
    <property type="match status" value="1"/>
</dbReference>
<organism>
    <name type="scientific">Zea mays</name>
    <name type="common">Maize</name>
    <dbReference type="NCBI Taxonomy" id="4577"/>
    <lineage>
        <taxon>Eukaryota</taxon>
        <taxon>Viridiplantae</taxon>
        <taxon>Streptophyta</taxon>
        <taxon>Embryophyta</taxon>
        <taxon>Tracheophyta</taxon>
        <taxon>Spermatophyta</taxon>
        <taxon>Magnoliopsida</taxon>
        <taxon>Liliopsida</taxon>
        <taxon>Poales</taxon>
        <taxon>Poaceae</taxon>
        <taxon>PACMAD clade</taxon>
        <taxon>Panicoideae</taxon>
        <taxon>Andropogonodae</taxon>
        <taxon>Andropogoneae</taxon>
        <taxon>Tripsacinae</taxon>
        <taxon>Zea</taxon>
    </lineage>
</organism>
<protein>
    <recommendedName>
        <fullName>Glutathione transferase GST 23</fullName>
        <ecNumber>2.5.1.18</ecNumber>
    </recommendedName>
    <alternativeName>
        <fullName>Glutathione transferase GST 36</fullName>
    </alternativeName>
</protein>
<accession>Q9FQA3</accession>
<accession>Q9FQB6</accession>